<sequence>MSLSPRLYTQVSRLPRELLTACSITLATRSFSVLHRPAPNYPGHVPLTSIERGGLAVGSAVMAFFNPYRADLIAACGEATATPYFIYRLRDAMLSSPTGRRILRDRPRISSKTLSMPRLRALPPNTVGRCYAEWLDREGVSPDTRDSVKYIDDEECAYVMQRYRECHDFYHAITGLPIVREGEVALKAFEFANTLLPMTGLSMFAVMSLKPAERRRFFTIYAPWAFANGLKAEEVINVYWEEQLERSVEELREELGIEKPLDLRDIRRMEKERKKAQKAT</sequence>
<feature type="transit peptide" description="Mitochondrion" evidence="1">
    <location>
        <begin position="1"/>
        <end position="31"/>
    </location>
</feature>
<feature type="chain" id="PRO_0000388101" description="Ubiquinone biosynthesis protein coq4, mitochondrial">
    <location>
        <begin position="32"/>
        <end position="280"/>
    </location>
</feature>
<feature type="binding site" evidence="1">
    <location>
        <position position="167"/>
    </location>
    <ligand>
        <name>Zn(2+)</name>
        <dbReference type="ChEBI" id="CHEBI:29105"/>
    </ligand>
</feature>
<feature type="binding site" evidence="1">
    <location>
        <position position="168"/>
    </location>
    <ligand>
        <name>Zn(2+)</name>
        <dbReference type="ChEBI" id="CHEBI:29105"/>
    </ligand>
</feature>
<feature type="binding site" evidence="1">
    <location>
        <position position="171"/>
    </location>
    <ligand>
        <name>Zn(2+)</name>
        <dbReference type="ChEBI" id="CHEBI:29105"/>
    </ligand>
</feature>
<feature type="binding site" evidence="1">
    <location>
        <position position="183"/>
    </location>
    <ligand>
        <name>Zn(2+)</name>
        <dbReference type="ChEBI" id="CHEBI:29105"/>
    </ligand>
</feature>
<organism>
    <name type="scientific">Botryotinia fuckeliana (strain B05.10)</name>
    <name type="common">Noble rot fungus</name>
    <name type="synonym">Botrytis cinerea</name>
    <dbReference type="NCBI Taxonomy" id="332648"/>
    <lineage>
        <taxon>Eukaryota</taxon>
        <taxon>Fungi</taxon>
        <taxon>Dikarya</taxon>
        <taxon>Ascomycota</taxon>
        <taxon>Pezizomycotina</taxon>
        <taxon>Leotiomycetes</taxon>
        <taxon>Helotiales</taxon>
        <taxon>Sclerotiniaceae</taxon>
        <taxon>Botrytis</taxon>
    </lineage>
</organism>
<keyword id="KW-0456">Lyase</keyword>
<keyword id="KW-0472">Membrane</keyword>
<keyword id="KW-0479">Metal-binding</keyword>
<keyword id="KW-0496">Mitochondrion</keyword>
<keyword id="KW-0999">Mitochondrion inner membrane</keyword>
<keyword id="KW-1185">Reference proteome</keyword>
<keyword id="KW-0809">Transit peptide</keyword>
<keyword id="KW-0831">Ubiquinone biosynthesis</keyword>
<keyword id="KW-0862">Zinc</keyword>
<protein>
    <recommendedName>
        <fullName evidence="1">Ubiquinone biosynthesis protein coq4, mitochondrial</fullName>
    </recommendedName>
    <alternativeName>
        <fullName>4-hydroxy-3-methoxy-5-polyprenylbenzoate decarboxylase</fullName>
        <ecNumber evidence="1">4.1.1.130</ecNumber>
    </alternativeName>
    <alternativeName>
        <fullName evidence="1">Coenzyme Q biosynthesis protein 4</fullName>
    </alternativeName>
</protein>
<reference key="1">
    <citation type="journal article" date="2011" name="PLoS Genet.">
        <title>Genomic analysis of the necrotrophic fungal pathogens Sclerotinia sclerotiorum and Botrytis cinerea.</title>
        <authorList>
            <person name="Amselem J."/>
            <person name="Cuomo C.A."/>
            <person name="van Kan J.A.L."/>
            <person name="Viaud M."/>
            <person name="Benito E.P."/>
            <person name="Couloux A."/>
            <person name="Coutinho P.M."/>
            <person name="de Vries R.P."/>
            <person name="Dyer P.S."/>
            <person name="Fillinger S."/>
            <person name="Fournier E."/>
            <person name="Gout L."/>
            <person name="Hahn M."/>
            <person name="Kohn L."/>
            <person name="Lapalu N."/>
            <person name="Plummer K.M."/>
            <person name="Pradier J.-M."/>
            <person name="Quevillon E."/>
            <person name="Sharon A."/>
            <person name="Simon A."/>
            <person name="ten Have A."/>
            <person name="Tudzynski B."/>
            <person name="Tudzynski P."/>
            <person name="Wincker P."/>
            <person name="Andrew M."/>
            <person name="Anthouard V."/>
            <person name="Beever R.E."/>
            <person name="Beffa R."/>
            <person name="Benoit I."/>
            <person name="Bouzid O."/>
            <person name="Brault B."/>
            <person name="Chen Z."/>
            <person name="Choquer M."/>
            <person name="Collemare J."/>
            <person name="Cotton P."/>
            <person name="Danchin E.G."/>
            <person name="Da Silva C."/>
            <person name="Gautier A."/>
            <person name="Giraud C."/>
            <person name="Giraud T."/>
            <person name="Gonzalez C."/>
            <person name="Grossetete S."/>
            <person name="Gueldener U."/>
            <person name="Henrissat B."/>
            <person name="Howlett B.J."/>
            <person name="Kodira C."/>
            <person name="Kretschmer M."/>
            <person name="Lappartient A."/>
            <person name="Leroch M."/>
            <person name="Levis C."/>
            <person name="Mauceli E."/>
            <person name="Neuveglise C."/>
            <person name="Oeser B."/>
            <person name="Pearson M."/>
            <person name="Poulain J."/>
            <person name="Poussereau N."/>
            <person name="Quesneville H."/>
            <person name="Rascle C."/>
            <person name="Schumacher J."/>
            <person name="Segurens B."/>
            <person name="Sexton A."/>
            <person name="Silva E."/>
            <person name="Sirven C."/>
            <person name="Soanes D.M."/>
            <person name="Talbot N.J."/>
            <person name="Templeton M."/>
            <person name="Yandava C."/>
            <person name="Yarden O."/>
            <person name="Zeng Q."/>
            <person name="Rollins J.A."/>
            <person name="Lebrun M.-H."/>
            <person name="Dickman M."/>
        </authorList>
    </citation>
    <scope>NUCLEOTIDE SEQUENCE [LARGE SCALE GENOMIC DNA]</scope>
    <source>
        <strain>B05.10</strain>
    </source>
</reference>
<reference key="2">
    <citation type="journal article" date="2012" name="Eukaryot. Cell">
        <title>Genome update of Botrytis cinerea strains B05.10 and T4.</title>
        <authorList>
            <person name="Staats M."/>
            <person name="van Kan J.A.L."/>
        </authorList>
    </citation>
    <scope>NUCLEOTIDE SEQUENCE [LARGE SCALE GENOMIC DNA]</scope>
    <scope>GENOME REANNOTATION</scope>
    <source>
        <strain>B05.10</strain>
    </source>
</reference>
<reference key="3">
    <citation type="journal article" date="2017" name="Mol. Plant Pathol.">
        <title>A gapless genome sequence of the fungus Botrytis cinerea.</title>
        <authorList>
            <person name="van Kan J.A.L."/>
            <person name="Stassen J.H.M."/>
            <person name="Mosbach A."/>
            <person name="van der Lee T.A.J."/>
            <person name="Faino L."/>
            <person name="Farmer A.D."/>
            <person name="Papasotiriou D.G."/>
            <person name="Zhou S."/>
            <person name="Seidl M.F."/>
            <person name="Cottam E."/>
            <person name="Edel D."/>
            <person name="Hahn M."/>
            <person name="Schwartz D.C."/>
            <person name="Dietrich R.A."/>
            <person name="Widdison S."/>
            <person name="Scalliet G."/>
        </authorList>
    </citation>
    <scope>NUCLEOTIDE SEQUENCE [LARGE SCALE GENOMIC DNA]</scope>
    <scope>GENOME REANNOTATION</scope>
    <source>
        <strain>B05.10</strain>
    </source>
</reference>
<proteinExistence type="inferred from homology"/>
<comment type="function">
    <text evidence="1">Lyase that catalyzes the C1-decarboxylation of 4-hydroxy-3-methoxy-5-(all-trans-polyprenyl)benzoic acid into 2-methoxy-6-(all-trans-polyprenyl)phenol during ubiquinone biosynthesis.</text>
</comment>
<comment type="catalytic activity">
    <reaction evidence="1">
        <text>a 4-hydroxy-3-methoxy-5-(all-trans-polyprenyl)benzoate + H(+) = a 2-methoxy-6-(all-trans-polyprenyl)phenol + CO2</text>
        <dbReference type="Rhea" id="RHEA:81179"/>
        <dbReference type="Rhea" id="RHEA-COMP:9551"/>
        <dbReference type="Rhea" id="RHEA-COMP:10931"/>
        <dbReference type="ChEBI" id="CHEBI:15378"/>
        <dbReference type="ChEBI" id="CHEBI:16526"/>
        <dbReference type="ChEBI" id="CHEBI:62731"/>
        <dbReference type="ChEBI" id="CHEBI:84443"/>
        <dbReference type="EC" id="4.1.1.130"/>
    </reaction>
</comment>
<comment type="cofactor">
    <cofactor evidence="1">
        <name>Zn(2+)</name>
        <dbReference type="ChEBI" id="CHEBI:29105"/>
    </cofactor>
</comment>
<comment type="pathway">
    <text evidence="1">Cofactor biosynthesis; ubiquinone biosynthesis.</text>
</comment>
<comment type="subunit">
    <text evidence="1">Component of a multi-subunit COQ enzyme complex, composed of at least coq3, coq4, coq5, coq6, coq7 and coq9.</text>
</comment>
<comment type="subcellular location">
    <subcellularLocation>
        <location evidence="1">Mitochondrion inner membrane</location>
        <topology evidence="1">Peripheral membrane protein</topology>
        <orientation evidence="1">Matrix side</orientation>
    </subcellularLocation>
</comment>
<comment type="similarity">
    <text evidence="1">Belongs to the COQ4 family.</text>
</comment>
<accession>A6SS55</accession>
<accession>A0A384J4F3</accession>
<dbReference type="EC" id="4.1.1.130" evidence="1"/>
<dbReference type="EMBL" id="CP009805">
    <property type="protein sequence ID" value="ATZ45398.1"/>
    <property type="molecule type" value="Genomic_DNA"/>
</dbReference>
<dbReference type="SMR" id="A6SS55"/>
<dbReference type="EnsemblFungi" id="Bcin01g01870.1">
    <property type="protein sequence ID" value="Bcin01p01870.1"/>
    <property type="gene ID" value="Bcin01g01870"/>
</dbReference>
<dbReference type="GeneID" id="5426342"/>
<dbReference type="KEGG" id="bfu:BCIN_01g01870"/>
<dbReference type="VEuPathDB" id="FungiDB:Bcin01g01870"/>
<dbReference type="OMA" id="YYERHFH"/>
<dbReference type="OrthoDB" id="4249at2759"/>
<dbReference type="UniPathway" id="UPA00232"/>
<dbReference type="Proteomes" id="UP000001798">
    <property type="component" value="Chromosome bcin01"/>
</dbReference>
<dbReference type="GO" id="GO:0031314">
    <property type="term" value="C:extrinsic component of mitochondrial inner membrane"/>
    <property type="evidence" value="ECO:0007669"/>
    <property type="project" value="UniProtKB-UniRule"/>
</dbReference>
<dbReference type="GO" id="GO:0006744">
    <property type="term" value="P:ubiquinone biosynthetic process"/>
    <property type="evidence" value="ECO:0007669"/>
    <property type="project" value="UniProtKB-UniRule"/>
</dbReference>
<dbReference type="HAMAP" id="MF_03111">
    <property type="entry name" value="Coq4"/>
    <property type="match status" value="1"/>
</dbReference>
<dbReference type="InterPro" id="IPR007715">
    <property type="entry name" value="Coq4"/>
</dbReference>
<dbReference type="InterPro" id="IPR027540">
    <property type="entry name" value="Coq4_euk"/>
</dbReference>
<dbReference type="PANTHER" id="PTHR12922">
    <property type="entry name" value="UBIQUINONE BIOSYNTHESIS PROTEIN"/>
    <property type="match status" value="1"/>
</dbReference>
<dbReference type="PANTHER" id="PTHR12922:SF7">
    <property type="entry name" value="UBIQUINONE BIOSYNTHESIS PROTEIN COQ4 HOMOLOG, MITOCHONDRIAL"/>
    <property type="match status" value="1"/>
</dbReference>
<dbReference type="Pfam" id="PF05019">
    <property type="entry name" value="Coq4"/>
    <property type="match status" value="1"/>
</dbReference>
<name>COQ4_BOTFB</name>
<gene>
    <name type="primary">coq4</name>
    <name type="ORF">BC1G_15620</name>
    <name type="ORF">BCIN_01g01870</name>
</gene>
<evidence type="ECO:0000255" key="1">
    <source>
        <dbReference type="HAMAP-Rule" id="MF_03111"/>
    </source>
</evidence>